<dbReference type="EC" id="1.3.3.3" evidence="1"/>
<dbReference type="EMBL" id="AE014291">
    <property type="protein sequence ID" value="AAN30457.1"/>
    <property type="molecule type" value="Genomic_DNA"/>
</dbReference>
<dbReference type="EMBL" id="CP002997">
    <property type="protein sequence ID" value="AEM18873.1"/>
    <property type="molecule type" value="Genomic_DNA"/>
</dbReference>
<dbReference type="RefSeq" id="WP_002964654.1">
    <property type="nucleotide sequence ID" value="NZ_KN046804.1"/>
</dbReference>
<dbReference type="SMR" id="P63851"/>
<dbReference type="GeneID" id="97533266"/>
<dbReference type="KEGG" id="bms:BR1550"/>
<dbReference type="KEGG" id="bsi:BS1330_I1544"/>
<dbReference type="PATRIC" id="fig|204722.21.peg.1842"/>
<dbReference type="HOGENOM" id="CLU_026169_0_1_5"/>
<dbReference type="PhylomeDB" id="P63851"/>
<dbReference type="UniPathway" id="UPA00251">
    <property type="reaction ID" value="UER00322"/>
</dbReference>
<dbReference type="Proteomes" id="UP000007104">
    <property type="component" value="Chromosome I"/>
</dbReference>
<dbReference type="GO" id="GO:0005737">
    <property type="term" value="C:cytoplasm"/>
    <property type="evidence" value="ECO:0007669"/>
    <property type="project" value="UniProtKB-SubCell"/>
</dbReference>
<dbReference type="GO" id="GO:0004109">
    <property type="term" value="F:coproporphyrinogen oxidase activity"/>
    <property type="evidence" value="ECO:0007669"/>
    <property type="project" value="UniProtKB-UniRule"/>
</dbReference>
<dbReference type="GO" id="GO:0046872">
    <property type="term" value="F:metal ion binding"/>
    <property type="evidence" value="ECO:0007669"/>
    <property type="project" value="UniProtKB-KW"/>
</dbReference>
<dbReference type="GO" id="GO:0042803">
    <property type="term" value="F:protein homodimerization activity"/>
    <property type="evidence" value="ECO:0000250"/>
    <property type="project" value="UniProtKB"/>
</dbReference>
<dbReference type="GO" id="GO:0006782">
    <property type="term" value="P:protoporphyrinogen IX biosynthetic process"/>
    <property type="evidence" value="ECO:0007669"/>
    <property type="project" value="UniProtKB-UniRule"/>
</dbReference>
<dbReference type="FunFam" id="3.40.1500.10:FF:000005">
    <property type="entry name" value="Oxygen-dependent coproporphyrinogen-III oxidase"/>
    <property type="match status" value="1"/>
</dbReference>
<dbReference type="Gene3D" id="3.40.1500.10">
    <property type="entry name" value="Coproporphyrinogen III oxidase, aerobic"/>
    <property type="match status" value="1"/>
</dbReference>
<dbReference type="HAMAP" id="MF_00333">
    <property type="entry name" value="Coprogen_oxidas"/>
    <property type="match status" value="1"/>
</dbReference>
<dbReference type="InterPro" id="IPR001260">
    <property type="entry name" value="Coprogen_oxidase_aer"/>
</dbReference>
<dbReference type="InterPro" id="IPR036406">
    <property type="entry name" value="Coprogen_oxidase_aer_sf"/>
</dbReference>
<dbReference type="InterPro" id="IPR018375">
    <property type="entry name" value="Coprogen_oxidase_CS"/>
</dbReference>
<dbReference type="NCBIfam" id="NF003727">
    <property type="entry name" value="PRK05330.1"/>
    <property type="match status" value="1"/>
</dbReference>
<dbReference type="PANTHER" id="PTHR10755">
    <property type="entry name" value="COPROPORPHYRINOGEN III OXIDASE, MITOCHONDRIAL"/>
    <property type="match status" value="1"/>
</dbReference>
<dbReference type="PANTHER" id="PTHR10755:SF0">
    <property type="entry name" value="OXYGEN-DEPENDENT COPROPORPHYRINOGEN-III OXIDASE, MITOCHONDRIAL"/>
    <property type="match status" value="1"/>
</dbReference>
<dbReference type="Pfam" id="PF01218">
    <property type="entry name" value="Coprogen_oxidas"/>
    <property type="match status" value="1"/>
</dbReference>
<dbReference type="PIRSF" id="PIRSF000166">
    <property type="entry name" value="Coproporphyri_ox"/>
    <property type="match status" value="1"/>
</dbReference>
<dbReference type="PRINTS" id="PR00073">
    <property type="entry name" value="COPRGNOXDASE"/>
</dbReference>
<dbReference type="SUPFAM" id="SSF102886">
    <property type="entry name" value="Coproporphyrinogen III oxidase"/>
    <property type="match status" value="1"/>
</dbReference>
<dbReference type="PROSITE" id="PS01021">
    <property type="entry name" value="COPROGEN_OXIDASE"/>
    <property type="match status" value="1"/>
</dbReference>
<proteinExistence type="inferred from homology"/>
<accession>P63851</accession>
<accession>G0KC31</accession>
<accession>Q8YIH7</accession>
<name>HEM6_BRUSU</name>
<evidence type="ECO:0000255" key="1">
    <source>
        <dbReference type="HAMAP-Rule" id="MF_00333"/>
    </source>
</evidence>
<evidence type="ECO:0000256" key="2">
    <source>
        <dbReference type="SAM" id="MobiDB-lite"/>
    </source>
</evidence>
<protein>
    <recommendedName>
        <fullName evidence="1">Oxygen-dependent coproporphyrinogen-III oxidase</fullName>
        <shortName evidence="1">CPO</shortName>
        <shortName evidence="1">Coprogen oxidase</shortName>
        <shortName evidence="1">Coproporphyrinogenase</shortName>
        <ecNumber evidence="1">1.3.3.3</ecNumber>
    </recommendedName>
</protein>
<keyword id="KW-0963">Cytoplasm</keyword>
<keyword id="KW-0350">Heme biosynthesis</keyword>
<keyword id="KW-0479">Metal-binding</keyword>
<keyword id="KW-0560">Oxidoreductase</keyword>
<keyword id="KW-0627">Porphyrin biosynthesis</keyword>
<organism>
    <name type="scientific">Brucella suis biovar 1 (strain 1330)</name>
    <dbReference type="NCBI Taxonomy" id="204722"/>
    <lineage>
        <taxon>Bacteria</taxon>
        <taxon>Pseudomonadati</taxon>
        <taxon>Pseudomonadota</taxon>
        <taxon>Alphaproteobacteria</taxon>
        <taxon>Hyphomicrobiales</taxon>
        <taxon>Brucellaceae</taxon>
        <taxon>Brucella/Ochrobactrum group</taxon>
        <taxon>Brucella</taxon>
    </lineage>
</organism>
<sequence>MKREDIPAIIPADIEEKKKAAQSWFEELRDRICASYEQLEDELQGPLSDREPGRFVRTPWQKDDGNGGGVMSIMHGRVFEKVGVHVSTVHGEFSPEFRKQIPGAEEDPRYWASGISLIAHPQNPNVPAVHMNTRMIVTTRQWFAGGADLTPVLDRRRTQEDPDTLAFHKAFRFICEKHKDIVDYQRLKEWCDEYFFLPHRDEPRGIGGIFYDWLHSPEEKGGWDSDFAFTRDVGRGFSVVYPHLVRQNFNKDWTEADRDEQLIRRGRYVEFNLLYDRGTIFGLKTGGNMNAILSSMPPVVKWP</sequence>
<reference key="1">
    <citation type="journal article" date="2002" name="Proc. Natl. Acad. Sci. U.S.A.">
        <title>The Brucella suis genome reveals fundamental similarities between animal and plant pathogens and symbionts.</title>
        <authorList>
            <person name="Paulsen I.T."/>
            <person name="Seshadri R."/>
            <person name="Nelson K.E."/>
            <person name="Eisen J.A."/>
            <person name="Heidelberg J.F."/>
            <person name="Read T.D."/>
            <person name="Dodson R.J."/>
            <person name="Umayam L.A."/>
            <person name="Brinkac L.M."/>
            <person name="Beanan M.J."/>
            <person name="Daugherty S.C."/>
            <person name="DeBoy R.T."/>
            <person name="Durkin A.S."/>
            <person name="Kolonay J.F."/>
            <person name="Madupu R."/>
            <person name="Nelson W.C."/>
            <person name="Ayodeji B."/>
            <person name="Kraul M."/>
            <person name="Shetty J."/>
            <person name="Malek J.A."/>
            <person name="Van Aken S.E."/>
            <person name="Riedmuller S."/>
            <person name="Tettelin H."/>
            <person name="Gill S.R."/>
            <person name="White O."/>
            <person name="Salzberg S.L."/>
            <person name="Hoover D.L."/>
            <person name="Lindler L.E."/>
            <person name="Halling S.M."/>
            <person name="Boyle S.M."/>
            <person name="Fraser C.M."/>
        </authorList>
    </citation>
    <scope>NUCLEOTIDE SEQUENCE [LARGE SCALE GENOMIC DNA]</scope>
    <source>
        <strain>1330</strain>
    </source>
</reference>
<reference key="2">
    <citation type="journal article" date="2011" name="J. Bacteriol.">
        <title>Revised genome sequence of Brucella suis 1330.</title>
        <authorList>
            <person name="Tae H."/>
            <person name="Shallom S."/>
            <person name="Settlage R."/>
            <person name="Preston D."/>
            <person name="Adams L.G."/>
            <person name="Garner H.R."/>
        </authorList>
    </citation>
    <scope>NUCLEOTIDE SEQUENCE [LARGE SCALE GENOMIC DNA]</scope>
    <source>
        <strain>1330</strain>
    </source>
</reference>
<feature type="chain" id="PRO_0000109888" description="Oxygen-dependent coproporphyrinogen-III oxidase">
    <location>
        <begin position="1"/>
        <end position="303"/>
    </location>
</feature>
<feature type="region of interest" description="Disordered" evidence="2">
    <location>
        <begin position="43"/>
        <end position="62"/>
    </location>
</feature>
<feature type="region of interest" description="Important for dimerization" evidence="1">
    <location>
        <begin position="268"/>
        <end position="303"/>
    </location>
</feature>
<feature type="compositionally biased region" description="Basic and acidic residues" evidence="2">
    <location>
        <begin position="48"/>
        <end position="62"/>
    </location>
</feature>
<feature type="active site" description="Proton donor" evidence="1">
    <location>
        <position position="130"/>
    </location>
</feature>
<feature type="binding site" evidence="1">
    <location>
        <position position="116"/>
    </location>
    <ligand>
        <name>substrate</name>
    </ligand>
</feature>
<feature type="binding site" evidence="1">
    <location>
        <position position="120"/>
    </location>
    <ligand>
        <name>a divalent metal cation</name>
        <dbReference type="ChEBI" id="CHEBI:60240"/>
    </ligand>
</feature>
<feature type="binding site" evidence="1">
    <location>
        <position position="130"/>
    </location>
    <ligand>
        <name>a divalent metal cation</name>
        <dbReference type="ChEBI" id="CHEBI:60240"/>
    </ligand>
</feature>
<feature type="binding site" evidence="1">
    <location>
        <begin position="132"/>
        <end position="134"/>
    </location>
    <ligand>
        <name>substrate</name>
    </ligand>
</feature>
<feature type="binding site" evidence="1">
    <location>
        <position position="168"/>
    </location>
    <ligand>
        <name>a divalent metal cation</name>
        <dbReference type="ChEBI" id="CHEBI:60240"/>
    </ligand>
</feature>
<feature type="binding site" evidence="1">
    <location>
        <position position="199"/>
    </location>
    <ligand>
        <name>a divalent metal cation</name>
        <dbReference type="ChEBI" id="CHEBI:60240"/>
    </ligand>
</feature>
<feature type="binding site" evidence="1">
    <location>
        <begin position="286"/>
        <end position="288"/>
    </location>
    <ligand>
        <name>substrate</name>
    </ligand>
</feature>
<feature type="site" description="Important for dimerization" evidence="1">
    <location>
        <position position="199"/>
    </location>
</feature>
<gene>
    <name evidence="1" type="primary">hemF</name>
    <name type="ordered locus">BR1550</name>
    <name type="ordered locus">BS1330_I1544</name>
</gene>
<comment type="function">
    <text evidence="1">Involved in the heme biosynthesis. Catalyzes the aerobic oxidative decarboxylation of propionate groups of rings A and B of coproporphyrinogen-III to yield the vinyl groups in protoporphyrinogen-IX.</text>
</comment>
<comment type="catalytic activity">
    <reaction evidence="1">
        <text>coproporphyrinogen III + O2 + 2 H(+) = protoporphyrinogen IX + 2 CO2 + 2 H2O</text>
        <dbReference type="Rhea" id="RHEA:18257"/>
        <dbReference type="ChEBI" id="CHEBI:15377"/>
        <dbReference type="ChEBI" id="CHEBI:15378"/>
        <dbReference type="ChEBI" id="CHEBI:15379"/>
        <dbReference type="ChEBI" id="CHEBI:16526"/>
        <dbReference type="ChEBI" id="CHEBI:57307"/>
        <dbReference type="ChEBI" id="CHEBI:57309"/>
        <dbReference type="EC" id="1.3.3.3"/>
    </reaction>
</comment>
<comment type="cofactor">
    <cofactor evidence="1">
        <name>a divalent metal cation</name>
        <dbReference type="ChEBI" id="CHEBI:60240"/>
    </cofactor>
</comment>
<comment type="pathway">
    <text evidence="1">Porphyrin-containing compound metabolism; protoporphyrin-IX biosynthesis; protoporphyrinogen-IX from coproporphyrinogen-III (O2 route): step 1/1.</text>
</comment>
<comment type="subunit">
    <text evidence="1">Homodimer.</text>
</comment>
<comment type="subcellular location">
    <subcellularLocation>
        <location evidence="1">Cytoplasm</location>
    </subcellularLocation>
</comment>
<comment type="similarity">
    <text evidence="1">Belongs to the aerobic coproporphyrinogen-III oxidase family.</text>
</comment>